<geneLocation type="chloroplast"/>
<comment type="function">
    <text evidence="1">This protein binds specifically to 23S rRNA.</text>
</comment>
<comment type="function">
    <text evidence="1">The globular domain of the protein is located near the polypeptide exit tunnel on the outside of the subunit, while an extended beta-hairpin is found that lines the wall of the exit tunnel in the center of the 70S ribosome.</text>
</comment>
<comment type="subunit">
    <text evidence="1">Part of the 50S ribosomal subunit.</text>
</comment>
<comment type="subcellular location">
    <subcellularLocation>
        <location>Plastid</location>
        <location>Chloroplast</location>
    </subcellularLocation>
</comment>
<comment type="similarity">
    <text evidence="2">Belongs to the universal ribosomal protein uL22 family.</text>
</comment>
<name>RK22_OENGL</name>
<accession>B0Z583</accession>
<reference key="1">
    <citation type="journal article" date="2008" name="Nucleic Acids Res.">
        <title>The complete nucleotide sequences of the five genetically distinct plastid genomes of Oenothera, subsection Oenothera: I. Sequence evaluation and plastome evolution.</title>
        <authorList>
            <person name="Greiner S."/>
            <person name="Wang X."/>
            <person name="Rauwolf U."/>
            <person name="Silber M.V."/>
            <person name="Mayer K."/>
            <person name="Meurer J."/>
            <person name="Haberer G."/>
            <person name="Herrmann R.G."/>
        </authorList>
    </citation>
    <scope>NUCLEOTIDE SEQUENCE [LARGE SCALE GENOMIC DNA]</scope>
    <source>
        <strain>cv. Rr-lamarckiana Sweden</strain>
    </source>
</reference>
<dbReference type="EMBL" id="EU262890">
    <property type="protein sequence ID" value="ABX10076.1"/>
    <property type="molecule type" value="Genomic_DNA"/>
</dbReference>
<dbReference type="RefSeq" id="YP_001687322.1">
    <property type="nucleotide sequence ID" value="NC_010360.2"/>
</dbReference>
<dbReference type="SMR" id="B0Z583"/>
<dbReference type="GeneID" id="5955255"/>
<dbReference type="GO" id="GO:0009507">
    <property type="term" value="C:chloroplast"/>
    <property type="evidence" value="ECO:0007669"/>
    <property type="project" value="UniProtKB-SubCell"/>
</dbReference>
<dbReference type="GO" id="GO:0015934">
    <property type="term" value="C:large ribosomal subunit"/>
    <property type="evidence" value="ECO:0007669"/>
    <property type="project" value="InterPro"/>
</dbReference>
<dbReference type="GO" id="GO:0019843">
    <property type="term" value="F:rRNA binding"/>
    <property type="evidence" value="ECO:0007669"/>
    <property type="project" value="UniProtKB-UniRule"/>
</dbReference>
<dbReference type="GO" id="GO:0003735">
    <property type="term" value="F:structural constituent of ribosome"/>
    <property type="evidence" value="ECO:0007669"/>
    <property type="project" value="InterPro"/>
</dbReference>
<dbReference type="GO" id="GO:0006412">
    <property type="term" value="P:translation"/>
    <property type="evidence" value="ECO:0007669"/>
    <property type="project" value="UniProtKB-UniRule"/>
</dbReference>
<dbReference type="CDD" id="cd00336">
    <property type="entry name" value="Ribosomal_L22"/>
    <property type="match status" value="1"/>
</dbReference>
<dbReference type="FunFam" id="3.90.470.10:FF:000006">
    <property type="entry name" value="50S ribosomal protein L22, chloroplastic"/>
    <property type="match status" value="1"/>
</dbReference>
<dbReference type="Gene3D" id="3.90.470.10">
    <property type="entry name" value="Ribosomal protein L22/L17"/>
    <property type="match status" value="1"/>
</dbReference>
<dbReference type="HAMAP" id="MF_01331_B">
    <property type="entry name" value="Ribosomal_uL22_B"/>
    <property type="match status" value="1"/>
</dbReference>
<dbReference type="InterPro" id="IPR001063">
    <property type="entry name" value="Ribosomal_uL22"/>
</dbReference>
<dbReference type="InterPro" id="IPR005727">
    <property type="entry name" value="Ribosomal_uL22_bac/chlpt-type"/>
</dbReference>
<dbReference type="InterPro" id="IPR047867">
    <property type="entry name" value="Ribosomal_uL22_bac/org-type"/>
</dbReference>
<dbReference type="InterPro" id="IPR018260">
    <property type="entry name" value="Ribosomal_uL22_CS"/>
</dbReference>
<dbReference type="InterPro" id="IPR036394">
    <property type="entry name" value="Ribosomal_uL22_sf"/>
</dbReference>
<dbReference type="NCBIfam" id="TIGR01044">
    <property type="entry name" value="rplV_bact"/>
    <property type="match status" value="1"/>
</dbReference>
<dbReference type="PANTHER" id="PTHR13501">
    <property type="entry name" value="CHLOROPLAST 50S RIBOSOMAL PROTEIN L22-RELATED"/>
    <property type="match status" value="1"/>
</dbReference>
<dbReference type="PANTHER" id="PTHR13501:SF10">
    <property type="entry name" value="LARGE RIBOSOMAL SUBUNIT PROTEIN UL22M"/>
    <property type="match status" value="1"/>
</dbReference>
<dbReference type="Pfam" id="PF00237">
    <property type="entry name" value="Ribosomal_L22"/>
    <property type="match status" value="1"/>
</dbReference>
<dbReference type="SUPFAM" id="SSF54843">
    <property type="entry name" value="Ribosomal protein L22"/>
    <property type="match status" value="1"/>
</dbReference>
<dbReference type="PROSITE" id="PS00464">
    <property type="entry name" value="RIBOSOMAL_L22"/>
    <property type="match status" value="1"/>
</dbReference>
<proteinExistence type="inferred from homology"/>
<protein>
    <recommendedName>
        <fullName evidence="2">Large ribosomal subunit protein uL22c</fullName>
    </recommendedName>
    <alternativeName>
        <fullName>50S ribosomal protein L22, chloroplastic</fullName>
    </alternativeName>
</protein>
<feature type="chain" id="PRO_0000354588" description="Large ribosomal subunit protein uL22c">
    <location>
        <begin position="1"/>
        <end position="137"/>
    </location>
</feature>
<keyword id="KW-0150">Chloroplast</keyword>
<keyword id="KW-0934">Plastid</keyword>
<keyword id="KW-0687">Ribonucleoprotein</keyword>
<keyword id="KW-0689">Ribosomal protein</keyword>
<keyword id="KW-0694">RNA-binding</keyword>
<keyword id="KW-0699">rRNA-binding</keyword>
<gene>
    <name type="primary">rpl22</name>
</gene>
<organism>
    <name type="scientific">Oenothera glazioviana</name>
    <name type="common">Large-flowered evening primrose</name>
    <name type="synonym">Oenothera erythrosepala</name>
    <dbReference type="NCBI Taxonomy" id="482428"/>
    <lineage>
        <taxon>Eukaryota</taxon>
        <taxon>Viridiplantae</taxon>
        <taxon>Streptophyta</taxon>
        <taxon>Embryophyta</taxon>
        <taxon>Tracheophyta</taxon>
        <taxon>Spermatophyta</taxon>
        <taxon>Magnoliopsida</taxon>
        <taxon>eudicotyledons</taxon>
        <taxon>Gunneridae</taxon>
        <taxon>Pentapetalae</taxon>
        <taxon>rosids</taxon>
        <taxon>malvids</taxon>
        <taxon>Myrtales</taxon>
        <taxon>Onagraceae</taxon>
        <taxon>Onagroideae</taxon>
        <taxon>Onagreae</taxon>
        <taxon>Oenothera</taxon>
    </lineage>
</organism>
<sequence>MKKKKTYGEVYALGQYISMSAPKARRVIDQIRGRSYEETLMLLALMPYRACDPILKLVNSAAANARHNMSFNEATLVISKAEVNEGTTVKKLKPRARGRSYPIRRPTCHIRIVLQDTSFDEFEEDFFSLKKDAWEKK</sequence>
<evidence type="ECO:0000250" key="1"/>
<evidence type="ECO:0000305" key="2"/>